<protein>
    <recommendedName>
        <fullName evidence="1">Chromosome partition protein MukF</fullName>
    </recommendedName>
</protein>
<name>MUKF_CITK8</name>
<feature type="chain" id="PRO_1000069925" description="Chromosome partition protein MukF">
    <location>
        <begin position="1"/>
        <end position="440"/>
    </location>
</feature>
<feature type="region of interest" description="Leucine-zipper">
    <location>
        <begin position="208"/>
        <end position="236"/>
    </location>
</feature>
<dbReference type="EMBL" id="CP000822">
    <property type="protein sequence ID" value="ABV13270.1"/>
    <property type="molecule type" value="Genomic_DNA"/>
</dbReference>
<dbReference type="RefSeq" id="WP_012133002.1">
    <property type="nucleotide sequence ID" value="NC_009792.1"/>
</dbReference>
<dbReference type="SMR" id="A8AIF7"/>
<dbReference type="STRING" id="290338.CKO_02146"/>
<dbReference type="GeneID" id="45136087"/>
<dbReference type="KEGG" id="cko:CKO_02146"/>
<dbReference type="HOGENOM" id="CLU_049853_0_0_6"/>
<dbReference type="OrthoDB" id="6450805at2"/>
<dbReference type="Proteomes" id="UP000008148">
    <property type="component" value="Chromosome"/>
</dbReference>
<dbReference type="GO" id="GO:0005737">
    <property type="term" value="C:cytoplasm"/>
    <property type="evidence" value="ECO:0007669"/>
    <property type="project" value="UniProtKB-UniRule"/>
</dbReference>
<dbReference type="GO" id="GO:0009295">
    <property type="term" value="C:nucleoid"/>
    <property type="evidence" value="ECO:0007669"/>
    <property type="project" value="UniProtKB-SubCell"/>
</dbReference>
<dbReference type="GO" id="GO:0005509">
    <property type="term" value="F:calcium ion binding"/>
    <property type="evidence" value="ECO:0007669"/>
    <property type="project" value="UniProtKB-UniRule"/>
</dbReference>
<dbReference type="GO" id="GO:0051301">
    <property type="term" value="P:cell division"/>
    <property type="evidence" value="ECO:0007669"/>
    <property type="project" value="UniProtKB-KW"/>
</dbReference>
<dbReference type="GO" id="GO:0030261">
    <property type="term" value="P:chromosome condensation"/>
    <property type="evidence" value="ECO:0007669"/>
    <property type="project" value="UniProtKB-KW"/>
</dbReference>
<dbReference type="GO" id="GO:0007059">
    <property type="term" value="P:chromosome segregation"/>
    <property type="evidence" value="ECO:0007669"/>
    <property type="project" value="UniProtKB-UniRule"/>
</dbReference>
<dbReference type="GO" id="GO:0006260">
    <property type="term" value="P:DNA replication"/>
    <property type="evidence" value="ECO:0007669"/>
    <property type="project" value="UniProtKB-UniRule"/>
</dbReference>
<dbReference type="CDD" id="cd16337">
    <property type="entry name" value="MukF_C"/>
    <property type="match status" value="1"/>
</dbReference>
<dbReference type="CDD" id="cd16335">
    <property type="entry name" value="MukF_N"/>
    <property type="match status" value="1"/>
</dbReference>
<dbReference type="Gene3D" id="1.20.58.590">
    <property type="entry name" value="Chromosome partition protein MukF, middle domain"/>
    <property type="match status" value="1"/>
</dbReference>
<dbReference type="Gene3D" id="1.10.225.40">
    <property type="entry name" value="MukF, C-terminal domain"/>
    <property type="match status" value="1"/>
</dbReference>
<dbReference type="Gene3D" id="1.10.10.10">
    <property type="entry name" value="Winged helix-like DNA-binding domain superfamily/Winged helix DNA-binding domain"/>
    <property type="match status" value="1"/>
</dbReference>
<dbReference type="HAMAP" id="MF_01803">
    <property type="entry name" value="MukF"/>
    <property type="match status" value="1"/>
</dbReference>
<dbReference type="InterPro" id="IPR005582">
    <property type="entry name" value="Chromosome_partition_MukF"/>
</dbReference>
<dbReference type="InterPro" id="IPR033441">
    <property type="entry name" value="MukF_C"/>
</dbReference>
<dbReference type="InterPro" id="IPR038198">
    <property type="entry name" value="MukF_C_sf"/>
</dbReference>
<dbReference type="InterPro" id="IPR033440">
    <property type="entry name" value="MukF_M"/>
</dbReference>
<dbReference type="InterPro" id="IPR036141">
    <property type="entry name" value="MukF_M_sp"/>
</dbReference>
<dbReference type="InterPro" id="IPR033439">
    <property type="entry name" value="MukF_WHTH"/>
</dbReference>
<dbReference type="InterPro" id="IPR036388">
    <property type="entry name" value="WH-like_DNA-bd_sf"/>
</dbReference>
<dbReference type="InterPro" id="IPR036390">
    <property type="entry name" value="WH_DNA-bd_sf"/>
</dbReference>
<dbReference type="NCBIfam" id="NF003615">
    <property type="entry name" value="PRK05260.1"/>
    <property type="match status" value="1"/>
</dbReference>
<dbReference type="Pfam" id="PF03882">
    <property type="entry name" value="KicB"/>
    <property type="match status" value="1"/>
</dbReference>
<dbReference type="Pfam" id="PF17193">
    <property type="entry name" value="MukF_C"/>
    <property type="match status" value="1"/>
</dbReference>
<dbReference type="Pfam" id="PF17192">
    <property type="entry name" value="MukF_M"/>
    <property type="match status" value="1"/>
</dbReference>
<dbReference type="PIRSF" id="PIRSF018282">
    <property type="entry name" value="MukF"/>
    <property type="match status" value="1"/>
</dbReference>
<dbReference type="SUPFAM" id="SSF140570">
    <property type="entry name" value="MukF C-terminal domain-like"/>
    <property type="match status" value="1"/>
</dbReference>
<dbReference type="SUPFAM" id="SSF46785">
    <property type="entry name" value="Winged helix' DNA-binding domain"/>
    <property type="match status" value="1"/>
</dbReference>
<accession>A8AIF7</accession>
<comment type="function">
    <text evidence="1">Involved in chromosome condensation, segregation and cell cycle progression. May participate in facilitating chromosome segregation by condensation DNA from both sides of a centrally located replisome during cell division. Not required for mini-F plasmid partitioning. Probably acts via its interaction with MukB and MukE. Overexpression results in anucleate cells. It has a calcium binding activity.</text>
</comment>
<comment type="subunit">
    <text evidence="1">Interacts, and probably forms a ternary complex, with MukE and MukB via its C-terminal region. The complex formation is stimulated by calcium or magnesium. It is required for an interaction between MukE and MukB.</text>
</comment>
<comment type="subcellular location">
    <subcellularLocation>
        <location evidence="1">Cytoplasm</location>
        <location evidence="1">Nucleoid</location>
    </subcellularLocation>
    <text evidence="1">Restricted to the nucleoid region.</text>
</comment>
<comment type="similarity">
    <text evidence="1">Belongs to the MukF family.</text>
</comment>
<gene>
    <name evidence="1" type="primary">mukF</name>
    <name type="ordered locus">CKO_02146</name>
</gene>
<reference key="1">
    <citation type="submission" date="2007-08" db="EMBL/GenBank/DDBJ databases">
        <authorList>
            <consortium name="The Citrobacter koseri Genome Sequencing Project"/>
            <person name="McClelland M."/>
            <person name="Sanderson E.K."/>
            <person name="Porwollik S."/>
            <person name="Spieth J."/>
            <person name="Clifton W.S."/>
            <person name="Latreille P."/>
            <person name="Courtney L."/>
            <person name="Wang C."/>
            <person name="Pepin K."/>
            <person name="Bhonagiri V."/>
            <person name="Nash W."/>
            <person name="Johnson M."/>
            <person name="Thiruvilangam P."/>
            <person name="Wilson R."/>
        </authorList>
    </citation>
    <scope>NUCLEOTIDE SEQUENCE [LARGE SCALE GENOMIC DNA]</scope>
    <source>
        <strain>ATCC BAA-895 / CDC 4225-83 / SGSC4696</strain>
    </source>
</reference>
<proteinExistence type="inferred from homology"/>
<keyword id="KW-0106">Calcium</keyword>
<keyword id="KW-0131">Cell cycle</keyword>
<keyword id="KW-0132">Cell division</keyword>
<keyword id="KW-0159">Chromosome partition</keyword>
<keyword id="KW-0963">Cytoplasm</keyword>
<keyword id="KW-0226">DNA condensation</keyword>
<keyword id="KW-1185">Reference proteome</keyword>
<evidence type="ECO:0000255" key="1">
    <source>
        <dbReference type="HAMAP-Rule" id="MF_01803"/>
    </source>
</evidence>
<organism>
    <name type="scientific">Citrobacter koseri (strain ATCC BAA-895 / CDC 4225-83 / SGSC4696)</name>
    <dbReference type="NCBI Taxonomy" id="290338"/>
    <lineage>
        <taxon>Bacteria</taxon>
        <taxon>Pseudomonadati</taxon>
        <taxon>Pseudomonadota</taxon>
        <taxon>Gammaproteobacteria</taxon>
        <taxon>Enterobacterales</taxon>
        <taxon>Enterobacteriaceae</taxon>
        <taxon>Citrobacter</taxon>
    </lineage>
</organism>
<sequence>MSEFSQTVPELVAWARKNDFSISLPVDRLSFLLAVATLNGERLDGEMSEGELVDAFRHVSDAFEQTSETIGVRANNAINDMVRQRLLNRFTSEQAEGNAIYRLTPLGIGITDYYIRQREFSTLRLSMQLSIVAGELKRAADAADEGGDEFHWHRNVYAPLKYSVAEIFDSIDLTQRIMDEQQQQVKDDIAQLLNKDWRAAISSCELLLSETSGTLRELQDTLEAAGDKLQANLLRIQDATMAHDDLHFVDRLVFDLQSKLDRIISWGQQSIDLWIGYDRHVHKFIRTAIDMDKNRVFAQRLRQSIQGYFDEPWALTYANADRLLDMRDEEMALRDEEVTGELPPDLEYEEFNEIREQLAAIIEEQLAIYKSRQAPLDLGLVVREYLAQYPRARHFDVARIVIDQAVRLGVAQADFTGLPAKWQPINDYGAKVQAHVIDKY</sequence>